<proteinExistence type="inferred from homology"/>
<keyword id="KW-0007">Acetylation</keyword>
<keyword id="KW-0158">Chromosome</keyword>
<keyword id="KW-0238">DNA-binding</keyword>
<keyword id="KW-0544">Nucleosome core</keyword>
<keyword id="KW-0539">Nucleus</keyword>
<keyword id="KW-1185">Reference proteome</keyword>
<accession>Q2GUP0</accession>
<dbReference type="EMBL" id="CH408033">
    <property type="protein sequence ID" value="EAQ87061.1"/>
    <property type="molecule type" value="Genomic_DNA"/>
</dbReference>
<dbReference type="RefSeq" id="XP_001225970.1">
    <property type="nucleotide sequence ID" value="XM_001225969.1"/>
</dbReference>
<dbReference type="SMR" id="Q2GUP0"/>
<dbReference type="FunCoup" id="Q2GUP0">
    <property type="interactions" value="928"/>
</dbReference>
<dbReference type="STRING" id="306901.Q2GUP0"/>
<dbReference type="GeneID" id="4394136"/>
<dbReference type="VEuPathDB" id="FungiDB:CHGG_08314"/>
<dbReference type="eggNOG" id="KOG1757">
    <property type="taxonomic scope" value="Eukaryota"/>
</dbReference>
<dbReference type="HOGENOM" id="CLU_062828_2_1_1"/>
<dbReference type="InParanoid" id="Q2GUP0"/>
<dbReference type="OMA" id="MNKKGAP"/>
<dbReference type="OrthoDB" id="9421954at2759"/>
<dbReference type="Proteomes" id="UP000001056">
    <property type="component" value="Unassembled WGS sequence"/>
</dbReference>
<dbReference type="GO" id="GO:0000791">
    <property type="term" value="C:euchromatin"/>
    <property type="evidence" value="ECO:0007669"/>
    <property type="project" value="EnsemblFungi"/>
</dbReference>
<dbReference type="GO" id="GO:0000786">
    <property type="term" value="C:nucleosome"/>
    <property type="evidence" value="ECO:0007669"/>
    <property type="project" value="UniProtKB-KW"/>
</dbReference>
<dbReference type="GO" id="GO:0005634">
    <property type="term" value="C:nucleus"/>
    <property type="evidence" value="ECO:0007669"/>
    <property type="project" value="UniProtKB-SubCell"/>
</dbReference>
<dbReference type="GO" id="GO:0031490">
    <property type="term" value="F:chromatin DNA binding"/>
    <property type="evidence" value="ECO:0007669"/>
    <property type="project" value="EnsemblFungi"/>
</dbReference>
<dbReference type="GO" id="GO:0042802">
    <property type="term" value="F:identical protein binding"/>
    <property type="evidence" value="ECO:0007669"/>
    <property type="project" value="EnsemblFungi"/>
</dbReference>
<dbReference type="GO" id="GO:0046982">
    <property type="term" value="F:protein heterodimerization activity"/>
    <property type="evidence" value="ECO:0007669"/>
    <property type="project" value="InterPro"/>
</dbReference>
<dbReference type="GO" id="GO:0000978">
    <property type="term" value="F:RNA polymerase II cis-regulatory region sequence-specific DNA binding"/>
    <property type="evidence" value="ECO:0007669"/>
    <property type="project" value="EnsemblFungi"/>
</dbReference>
<dbReference type="GO" id="GO:0030527">
    <property type="term" value="F:structural constituent of chromatin"/>
    <property type="evidence" value="ECO:0007669"/>
    <property type="project" value="InterPro"/>
</dbReference>
<dbReference type="GO" id="GO:0140898">
    <property type="term" value="P:CENP-A eviction from euchromatin"/>
    <property type="evidence" value="ECO:0007669"/>
    <property type="project" value="EnsemblFungi"/>
</dbReference>
<dbReference type="GO" id="GO:0070481">
    <property type="term" value="P:nuclear-transcribed mRNA catabolic process, non-stop decay"/>
    <property type="evidence" value="ECO:0007669"/>
    <property type="project" value="EnsemblFungi"/>
</dbReference>
<dbReference type="GO" id="GO:0006357">
    <property type="term" value="P:regulation of transcription by RNA polymerase II"/>
    <property type="evidence" value="ECO:0007669"/>
    <property type="project" value="EnsemblFungi"/>
</dbReference>
<dbReference type="GO" id="GO:0030466">
    <property type="term" value="P:silent mating-type cassette heterochromatin formation"/>
    <property type="evidence" value="ECO:0007669"/>
    <property type="project" value="EnsemblFungi"/>
</dbReference>
<dbReference type="GO" id="GO:0006368">
    <property type="term" value="P:transcription elongation by RNA polymerase II"/>
    <property type="evidence" value="ECO:0007669"/>
    <property type="project" value="EnsemblFungi"/>
</dbReference>
<dbReference type="CDD" id="cd00074">
    <property type="entry name" value="HFD_H2A"/>
    <property type="match status" value="1"/>
</dbReference>
<dbReference type="FunFam" id="1.10.20.10:FF:000021">
    <property type="entry name" value="Histone H2A"/>
    <property type="match status" value="1"/>
</dbReference>
<dbReference type="Gene3D" id="1.10.20.10">
    <property type="entry name" value="Histone, subunit A"/>
    <property type="match status" value="1"/>
</dbReference>
<dbReference type="InterPro" id="IPR009072">
    <property type="entry name" value="Histone-fold"/>
</dbReference>
<dbReference type="InterPro" id="IPR002119">
    <property type="entry name" value="Histone_H2A"/>
</dbReference>
<dbReference type="InterPro" id="IPR007125">
    <property type="entry name" value="Histone_H2A/H2B/H3"/>
</dbReference>
<dbReference type="InterPro" id="IPR032454">
    <property type="entry name" value="Histone_H2A_C"/>
</dbReference>
<dbReference type="PANTHER" id="PTHR23430">
    <property type="entry name" value="HISTONE H2A"/>
    <property type="match status" value="1"/>
</dbReference>
<dbReference type="Pfam" id="PF00125">
    <property type="entry name" value="Histone"/>
    <property type="match status" value="1"/>
</dbReference>
<dbReference type="Pfam" id="PF16211">
    <property type="entry name" value="Histone_H2A_C"/>
    <property type="match status" value="1"/>
</dbReference>
<dbReference type="PRINTS" id="PR00620">
    <property type="entry name" value="HISTONEH2A"/>
</dbReference>
<dbReference type="SMART" id="SM00414">
    <property type="entry name" value="H2A"/>
    <property type="match status" value="1"/>
</dbReference>
<dbReference type="SUPFAM" id="SSF47113">
    <property type="entry name" value="Histone-fold"/>
    <property type="match status" value="1"/>
</dbReference>
<sequence length="143" mass="15263">MAGGKGKSSGGKSSGGKTSGVDGTKKQQSHSARAGLQFPCGRVKRFLKQNTQNKMRVGAKAAVYVTAVLEYLTAEVLELAGNAAKDLKVKRITPRHLQLAIRGDEELDTLIRATIAFGGVLPHINRALLLKVEQKKKAKAIEA</sequence>
<name>H2AZ_CHAGB</name>
<reference key="1">
    <citation type="journal article" date="2015" name="Genome Announc.">
        <title>Draft genome sequence of the cellulolytic fungus Chaetomium globosum.</title>
        <authorList>
            <person name="Cuomo C.A."/>
            <person name="Untereiner W.A."/>
            <person name="Ma L.-J."/>
            <person name="Grabherr M."/>
            <person name="Birren B.W."/>
        </authorList>
    </citation>
    <scope>NUCLEOTIDE SEQUENCE [LARGE SCALE GENOMIC DNA]</scope>
    <source>
        <strain>ATCC 6205 / CBS 148.51 / DSM 1962 / NBRC 6347 / NRRL 1970</strain>
    </source>
</reference>
<evidence type="ECO:0000250" key="1"/>
<evidence type="ECO:0000256" key="2">
    <source>
        <dbReference type="SAM" id="MobiDB-lite"/>
    </source>
</evidence>
<evidence type="ECO:0000305" key="3"/>
<feature type="chain" id="PRO_0000297721" description="Histone H2A.Z">
    <location>
        <begin position="1"/>
        <end position="143"/>
    </location>
</feature>
<feature type="region of interest" description="Disordered" evidence="2">
    <location>
        <begin position="1"/>
        <end position="34"/>
    </location>
</feature>
<feature type="compositionally biased region" description="Gly residues" evidence="2">
    <location>
        <begin position="1"/>
        <end position="18"/>
    </location>
</feature>
<feature type="modified residue" description="N6-acetyllysine" evidence="1">
    <location>
        <position position="5"/>
    </location>
</feature>
<feature type="modified residue" description="N6-acetyllysine" evidence="1">
    <location>
        <position position="12"/>
    </location>
</feature>
<organism>
    <name type="scientific">Chaetomium globosum (strain ATCC 6205 / CBS 148.51 / DSM 1962 / NBRC 6347 / NRRL 1970)</name>
    <name type="common">Soil fungus</name>
    <dbReference type="NCBI Taxonomy" id="306901"/>
    <lineage>
        <taxon>Eukaryota</taxon>
        <taxon>Fungi</taxon>
        <taxon>Dikarya</taxon>
        <taxon>Ascomycota</taxon>
        <taxon>Pezizomycotina</taxon>
        <taxon>Sordariomycetes</taxon>
        <taxon>Sordariomycetidae</taxon>
        <taxon>Sordariales</taxon>
        <taxon>Chaetomiaceae</taxon>
        <taxon>Chaetomium</taxon>
    </lineage>
</organism>
<gene>
    <name type="primary">HTZ1</name>
    <name type="ORF">CHGG_08314</name>
</gene>
<comment type="function">
    <text evidence="1">Variant histone H2A which can replace H2A in some nucleosomes. Nucleosomes wrap and compact DNA into chromatin, limiting DNA accessibility to the cellular machineries which require DNA as a template. Histones thereby play a central role in transcription regulation, DNA repair, DNA replication and chromosomal stability. DNA accessibility is regulated via a complex set of post-translational modifications of histones, also called histone code, and nucleosome remodeling. This variant is enriched at promoters, it may keep them in a repressed state until the appropriate activation signal is received. Near telomeres, it may counteract gene silencing caused by the spread of heterochromatin proteins. Required for the RNA polymerase II and SPT15/TBP recruitment to the target genes. Involved in chromosome stability (By similarity).</text>
</comment>
<comment type="subunit">
    <text evidence="1">The nucleosome is a histone octamer containing two molecules each of H2A, H2B, H3 and H4 assembled in one H3-H4 heterotetramer and two H2A-H2B heterodimers. The octamer wraps approximately 147 bp of DNA. H2A or its variant H2A.Z forms a heterodimer with H2B. H2A.Z associates with the VPS72/SWC2 subunit of the SWR1 chromatin remodeling complex. Also interacts with RBP1/DNA-directed RNA polymerase II largest subunit (By similarity).</text>
</comment>
<comment type="subcellular location">
    <subcellularLocation>
        <location evidence="1">Nucleus</location>
    </subcellularLocation>
    <subcellularLocation>
        <location evidence="1">Chromosome</location>
    </subcellularLocation>
</comment>
<comment type="PTM">
    <text evidence="1">Acetylated once deposited into chromatin.</text>
</comment>
<comment type="similarity">
    <text evidence="3">Belongs to the histone H2A family.</text>
</comment>
<protein>
    <recommendedName>
        <fullName>Histone H2A.Z</fullName>
    </recommendedName>
</protein>